<gene>
    <name type="primary">SWT21</name>
    <name type="ORF">EC1118_1N9_1607g</name>
</gene>
<accession>C8ZG43</accession>
<sequence>MEKKVICQDIFWSCDGTSFVSVHNDFGIRQYLVPEESNTDKLNRNLLLPFTRFFRNQSIVSCAIDPFYTLYNENSDRLAGDRIVVGGKNFPLQLYSLMDGQCILSYDTMNKINGEYETVYSVKIDVESRVYTGSCRNKVAIYDKSRRDAVWMNQSTKKASKGRQSIISCFEEQPMGGQALSRGSLLCGSYANEMFQVDCRHQRLERLNYTRTVAGGIVQILTSDNGRYVYVVRRNSDAISIYDRRNLQHELNVLRLPFRIHHNSAKLKAYIDTAYGLSMGTPQGTILNWGRDLVEFGGVPSHNSVDDPLITSIPPESEWRTNLGSTIPATVVKNCPGDPELFALSHGGTISLCRFGG</sequence>
<feature type="chain" id="PRO_0000405688" description="Protein SWT21">
    <location>
        <begin position="1"/>
        <end position="357"/>
    </location>
</feature>
<keyword id="KW-0507">mRNA processing</keyword>
<keyword id="KW-0508">mRNA splicing</keyword>
<keyword id="KW-0539">Nucleus</keyword>
<protein>
    <recommendedName>
        <fullName>Protein SWT21</fullName>
    </recommendedName>
    <alternativeName>
        <fullName>Synthetic With TGS1 protein 21</fullName>
    </alternativeName>
</protein>
<organism>
    <name type="scientific">Saccharomyces cerevisiae (strain Lalvin EC1118 / Prise de mousse)</name>
    <name type="common">Baker's yeast</name>
    <dbReference type="NCBI Taxonomy" id="643680"/>
    <lineage>
        <taxon>Eukaryota</taxon>
        <taxon>Fungi</taxon>
        <taxon>Dikarya</taxon>
        <taxon>Ascomycota</taxon>
        <taxon>Saccharomycotina</taxon>
        <taxon>Saccharomycetes</taxon>
        <taxon>Saccharomycetales</taxon>
        <taxon>Saccharomycetaceae</taxon>
        <taxon>Saccharomyces</taxon>
    </lineage>
</organism>
<evidence type="ECO:0000250" key="1"/>
<evidence type="ECO:0000305" key="2"/>
<comment type="function">
    <text evidence="1">Involved in mRNA splicing. Helps to stabilize the U1 snRNP-5' splice site interaction (By similarity).</text>
</comment>
<comment type="subunit">
    <text evidence="1">Associates with snRNPs.</text>
</comment>
<comment type="subcellular location">
    <subcellularLocation>
        <location evidence="1">Nucleus</location>
    </subcellularLocation>
</comment>
<comment type="similarity">
    <text evidence="2">Belongs to the SWT21 family.</text>
</comment>
<comment type="sequence caution" evidence="2">
    <conflict type="erroneous initiation">
        <sequence resource="EMBL-CDS" id="CAY82416"/>
    </conflict>
    <text>Extended N-terminus.</text>
</comment>
<proteinExistence type="inferred from homology"/>
<dbReference type="EMBL" id="FN393086">
    <property type="protein sequence ID" value="CAY82416.1"/>
    <property type="status" value="ALT_INIT"/>
    <property type="molecule type" value="Genomic_DNA"/>
</dbReference>
<dbReference type="SMR" id="C8ZG43"/>
<dbReference type="HOGENOM" id="CLU_662333_0_0_1"/>
<dbReference type="OrthoDB" id="38073at4893"/>
<dbReference type="Proteomes" id="UP000000286">
    <property type="component" value="Chromosome XIV, Scaffold EC1118_1N9"/>
</dbReference>
<dbReference type="GO" id="GO:0005634">
    <property type="term" value="C:nucleus"/>
    <property type="evidence" value="ECO:0007669"/>
    <property type="project" value="UniProtKB-SubCell"/>
</dbReference>
<dbReference type="GO" id="GO:0006397">
    <property type="term" value="P:mRNA processing"/>
    <property type="evidence" value="ECO:0007669"/>
    <property type="project" value="UniProtKB-KW"/>
</dbReference>
<dbReference type="GO" id="GO:0008380">
    <property type="term" value="P:RNA splicing"/>
    <property type="evidence" value="ECO:0007669"/>
    <property type="project" value="UniProtKB-KW"/>
</dbReference>
<dbReference type="Gene3D" id="2.130.10.10">
    <property type="entry name" value="YVTN repeat-like/Quinoprotein amine dehydrogenase"/>
    <property type="match status" value="1"/>
</dbReference>
<dbReference type="InterPro" id="IPR051150">
    <property type="entry name" value="SWT21/TCAB1_mRNA_Telomere"/>
</dbReference>
<dbReference type="InterPro" id="IPR015943">
    <property type="entry name" value="WD40/YVTN_repeat-like_dom_sf"/>
</dbReference>
<dbReference type="InterPro" id="IPR036322">
    <property type="entry name" value="WD40_repeat_dom_sf"/>
</dbReference>
<dbReference type="PANTHER" id="PTHR13211">
    <property type="entry name" value="TELOMERASE CAJAL BODY PROTEIN 1"/>
    <property type="match status" value="1"/>
</dbReference>
<dbReference type="PANTHER" id="PTHR13211:SF0">
    <property type="entry name" value="TELOMERASE CAJAL BODY PROTEIN 1"/>
    <property type="match status" value="1"/>
</dbReference>
<dbReference type="SUPFAM" id="SSF50978">
    <property type="entry name" value="WD40 repeat-like"/>
    <property type="match status" value="1"/>
</dbReference>
<reference key="1">
    <citation type="journal article" date="2009" name="Proc. Natl. Acad. Sci. U.S.A.">
        <title>Eukaryote-to-eukaryote gene transfer events revealed by the genome sequence of the wine yeast Saccharomyces cerevisiae EC1118.</title>
        <authorList>
            <person name="Novo M."/>
            <person name="Bigey F."/>
            <person name="Beyne E."/>
            <person name="Galeote V."/>
            <person name="Gavory F."/>
            <person name="Mallet S."/>
            <person name="Cambon B."/>
            <person name="Legras J.-L."/>
            <person name="Wincker P."/>
            <person name="Casaregola S."/>
            <person name="Dequin S."/>
        </authorList>
    </citation>
    <scope>NUCLEOTIDE SEQUENCE [LARGE SCALE GENOMIC DNA]</scope>
    <source>
        <strain>Lalvin EC1118 / Prise de mousse</strain>
    </source>
</reference>
<name>SWT21_YEAS8</name>